<protein>
    <recommendedName>
        <fullName>DNA-directed RNA polymerase 30 kDa polypeptide</fullName>
        <ecNumber>2.7.7.6</ecNumber>
    </recommendedName>
</protein>
<comment type="function">
    <text>Part of the DNA-dependent RNA polymerase which catalyzes the transcription of viral DNA into RNA using the four ribonucleoside triphosphates as substrates. Responsible for the transcription of early, intermediate and late genes. DNA-dependent RNA polymerase associates with the early transcription factor (ETF), itself composed of OPG118 and OPG134, thereby allowing the early genes transcription. Late transcription, and probably also intermediate transcription, require newly synthesized RNA polymerase.</text>
</comment>
<comment type="catalytic activity">
    <reaction>
        <text>RNA(n) + a ribonucleoside 5'-triphosphate = RNA(n+1) + diphosphate</text>
        <dbReference type="Rhea" id="RHEA:21248"/>
        <dbReference type="Rhea" id="RHEA-COMP:14527"/>
        <dbReference type="Rhea" id="RHEA-COMP:17342"/>
        <dbReference type="ChEBI" id="CHEBI:33019"/>
        <dbReference type="ChEBI" id="CHEBI:61557"/>
        <dbReference type="ChEBI" id="CHEBI:140395"/>
        <dbReference type="EC" id="2.7.7.6"/>
    </reaction>
</comment>
<comment type="subunit">
    <text>The DNA-dependent RNA polymerase (vRNAP) consists of eight subunits encoded by early viral genes and termed according to their apparent molecular masses Rpo147, Rpo132, Rpo35, Rpo30, Rpo22, Rpo19, Rpo18, and Rpo7. The same holoenzyme, with the addition of the transcription-specificity factor RAP94, is used for early gene expression.</text>
</comment>
<comment type="subcellular location">
    <subcellularLocation>
        <location>Virion</location>
    </subcellularLocation>
    <subcellularLocation>
        <location>Host cytoplasm</location>
    </subcellularLocation>
    <text>All the enzymes and other proteins required to synthesize early mRNAs are packaged within the virion core along with the DNA genome. This is necessary because viral early mRNAs are synthesized within minutes after virus entry into the cell and are extruded through pores in the core particle.</text>
</comment>
<comment type="alternative products">
    <event type="alternative initiation"/>
    <isoform>
        <id>P21603-1</id>
        <name>Long</name>
        <sequence type="displayed"/>
    </isoform>
    <isoform>
        <id>P21603-2</id>
        <name>Short</name>
        <sequence type="described" ref="VSP_018893"/>
    </isoform>
</comment>
<comment type="induction">
    <text evidence="3">Expressed in the early phase of the viral replicative cycle.</text>
</comment>
<comment type="similarity">
    <text evidence="4">Belongs to the poxviridae DNA-directed RNA polymerase 30 kDa subunit family.</text>
</comment>
<organismHost>
    <name type="scientific">Bos taurus</name>
    <name type="common">Bovine</name>
    <dbReference type="NCBI Taxonomy" id="9913"/>
</organismHost>
<organism>
    <name type="scientific">Vaccinia virus (strain Western Reserve)</name>
    <name type="common">VACV</name>
    <name type="synonym">Vaccinia virus (strain WR)</name>
    <dbReference type="NCBI Taxonomy" id="10254"/>
    <lineage>
        <taxon>Viruses</taxon>
        <taxon>Varidnaviria</taxon>
        <taxon>Bamfordvirae</taxon>
        <taxon>Nucleocytoviricota</taxon>
        <taxon>Pokkesviricetes</taxon>
        <taxon>Chitovirales</taxon>
        <taxon>Poxviridae</taxon>
        <taxon>Chordopoxvirinae</taxon>
        <taxon>Orthopoxvirus</taxon>
        <taxon>Vaccinia virus</taxon>
    </lineage>
</organism>
<sequence>MENVYISSYSSNEQTSMAVTATDIRELLSQYVDDANLEDLIEWAMEKSSKYYIKNIGNTKSNIEETKFESKNNIGIEYSKDSRNKLSYRNKPSIATNLEYKTLCDMIKGTSGTEKEFLRYLLFGIKCIKKGVEYNIDKIKDVSYNDYFNVLDEKYNTPCPNCKSRNTTPMMIQTRAADEPPLVRHACRDCKQHFKPPKFRAFRNLNVTTQSIHENKEITEILPDNNPSPPESPEPASPIDDGLIRATFDRNDEPPEDDE</sequence>
<name>RP30_VACCW</name>
<gene>
    <name type="primary">OPG066</name>
    <name type="synonym">RPO30</name>
    <name type="ordered locus">VACWR060</name>
    <name type="ORF">E4L</name>
</gene>
<keyword id="KW-0002">3D-structure</keyword>
<keyword id="KW-0024">Alternative initiation</keyword>
<keyword id="KW-0240">DNA-directed RNA polymerase</keyword>
<keyword id="KW-0244">Early protein</keyword>
<keyword id="KW-1035">Host cytoplasm</keyword>
<keyword id="KW-0479">Metal-binding</keyword>
<keyword id="KW-0548">Nucleotidyltransferase</keyword>
<keyword id="KW-1185">Reference proteome</keyword>
<keyword id="KW-0804">Transcription</keyword>
<keyword id="KW-0808">Transferase</keyword>
<keyword id="KW-0946">Virion</keyword>
<keyword id="KW-0862">Zinc</keyword>
<keyword id="KW-0863">Zinc-finger</keyword>
<accession>P21603</accession>
<accession>Q76ZW1</accession>
<feature type="chain" id="PRO_0000121457" description="DNA-directed RNA polymerase 30 kDa polypeptide">
    <location>
        <begin position="1"/>
        <end position="259"/>
    </location>
</feature>
<feature type="zinc finger region" description="TFIIS-type" evidence="1">
    <location>
        <begin position="155"/>
        <end position="195"/>
    </location>
</feature>
<feature type="region of interest" description="Disordered" evidence="2">
    <location>
        <begin position="220"/>
        <end position="259"/>
    </location>
</feature>
<feature type="compositionally biased region" description="Pro residues" evidence="2">
    <location>
        <begin position="226"/>
        <end position="236"/>
    </location>
</feature>
<feature type="binding site" evidence="1">
    <location>
        <position position="159"/>
    </location>
    <ligand>
        <name>Zn(2+)</name>
        <dbReference type="ChEBI" id="CHEBI:29105"/>
    </ligand>
</feature>
<feature type="binding site" evidence="1">
    <location>
        <position position="162"/>
    </location>
    <ligand>
        <name>Zn(2+)</name>
        <dbReference type="ChEBI" id="CHEBI:29105"/>
    </ligand>
</feature>
<feature type="binding site" evidence="1">
    <location>
        <position position="187"/>
    </location>
    <ligand>
        <name>Zn(2+)</name>
        <dbReference type="ChEBI" id="CHEBI:29105"/>
    </ligand>
</feature>
<feature type="binding site" evidence="1">
    <location>
        <position position="190"/>
    </location>
    <ligand>
        <name>Zn(2+)</name>
        <dbReference type="ChEBI" id="CHEBI:29105"/>
    </ligand>
</feature>
<feature type="splice variant" id="VSP_018893" description="In isoform Short." evidence="4">
    <location>
        <begin position="1"/>
        <end position="16"/>
    </location>
</feature>
<proteinExistence type="evidence at protein level"/>
<reference key="1">
    <citation type="journal article" date="1990" name="Mol. Cell. Biol.">
        <title>Identification of rpo30, a vaccinia virus RNA polymerase gene with structural similarity to a eucaryotic transcription elongation factor.</title>
        <authorList>
            <person name="Ahn B.-Y."/>
            <person name="Gershon P.D."/>
            <person name="Jones E.V."/>
            <person name="Moss B."/>
        </authorList>
    </citation>
    <scope>NUCLEOTIDE SEQUENCE [GENOMIC DNA]</scope>
</reference>
<reference key="2">
    <citation type="journal article" date="1990" name="J. Virol.">
        <title>Vaccinia virus gene encoding a 30-kilodalton subunit of the viral DNA-dependent RNA polymerase.</title>
        <authorList>
            <person name="Broyles S.S."/>
            <person name="Pennington M.J."/>
        </authorList>
    </citation>
    <scope>NUCLEOTIDE SEQUENCE [GENOMIC DNA]</scope>
</reference>
<reference key="3">
    <citation type="submission" date="2003-02" db="EMBL/GenBank/DDBJ databases">
        <title>Sequencing of the coding region of Vaccinia-WR to an average 9-fold redundancy and an error rate of 0.16/10kb.</title>
        <authorList>
            <person name="Esposito J.J."/>
            <person name="Frace A.M."/>
            <person name="Sammons S.A."/>
            <person name="Olsen-Rasmussen M."/>
            <person name="Osborne J."/>
            <person name="Wohlhueter R."/>
        </authorList>
    </citation>
    <scope>NUCLEOTIDE SEQUENCE [LARGE SCALE GENOMIC DNA]</scope>
</reference>
<reference key="4">
    <citation type="journal article" date="2003" name="J. Gen. Virol.">
        <title>Vaccinia virus transcription.</title>
        <authorList>
            <person name="Broyles S.S."/>
        </authorList>
    </citation>
    <scope>REVIEW</scope>
    <scope>FUNCTION</scope>
    <scope>SUBUNIT</scope>
</reference>
<reference key="5">
    <citation type="journal article" date="2015" name="J. Virol.">
        <title>Deciphering poxvirus gene expression by RNA sequencing and ribosome profiling.</title>
        <authorList>
            <person name="Yang Z."/>
            <person name="Cao S."/>
            <person name="Martens C.A."/>
            <person name="Porcella S.F."/>
            <person name="Xie Z."/>
            <person name="Ma M."/>
            <person name="Shen B."/>
            <person name="Moss B."/>
        </authorList>
    </citation>
    <scope>INDUCTION</scope>
</reference>
<evidence type="ECO:0000255" key="1">
    <source>
        <dbReference type="PROSITE-ProRule" id="PRU00472"/>
    </source>
</evidence>
<evidence type="ECO:0000256" key="2">
    <source>
        <dbReference type="SAM" id="MobiDB-lite"/>
    </source>
</evidence>
<evidence type="ECO:0000269" key="3">
    <source>
    </source>
</evidence>
<evidence type="ECO:0000305" key="4"/>
<dbReference type="EC" id="2.7.7.6"/>
<dbReference type="EMBL" id="M36339">
    <property type="protein sequence ID" value="AAB59824.1"/>
    <property type="molecule type" value="Genomic_DNA"/>
</dbReference>
<dbReference type="EMBL" id="M59813">
    <property type="protein sequence ID" value="AAA48306.1"/>
    <property type="molecule type" value="Genomic_DNA"/>
</dbReference>
<dbReference type="EMBL" id="AY243312">
    <property type="protein sequence ID" value="AAO89339.1"/>
    <property type="molecule type" value="Genomic_DNA"/>
</dbReference>
<dbReference type="PIR" id="A36406">
    <property type="entry name" value="RNVZ30"/>
</dbReference>
<dbReference type="RefSeq" id="YP_232942.1">
    <property type="nucleotide sequence ID" value="NC_006998.1"/>
</dbReference>
<dbReference type="PDB" id="8C8H">
    <property type="method" value="EM"/>
    <property type="resolution" value="3.84 A"/>
    <property type="chains" value="S=1-259"/>
</dbReference>
<dbReference type="PDBsum" id="8C8H"/>
<dbReference type="EMDB" id="EMD-16476"/>
<dbReference type="SMR" id="P21603"/>
<dbReference type="DNASU" id="3707593"/>
<dbReference type="GeneID" id="3707593"/>
<dbReference type="KEGG" id="vg:3707593"/>
<dbReference type="BRENDA" id="2.7.7.6">
    <property type="organism ID" value="6591"/>
</dbReference>
<dbReference type="Proteomes" id="UP000000344">
    <property type="component" value="Genome"/>
</dbReference>
<dbReference type="GO" id="GO:0000428">
    <property type="term" value="C:DNA-directed RNA polymerase complex"/>
    <property type="evidence" value="ECO:0007669"/>
    <property type="project" value="UniProtKB-KW"/>
</dbReference>
<dbReference type="GO" id="GO:0030430">
    <property type="term" value="C:host cell cytoplasm"/>
    <property type="evidence" value="ECO:0007669"/>
    <property type="project" value="UniProtKB-SubCell"/>
</dbReference>
<dbReference type="GO" id="GO:0044423">
    <property type="term" value="C:virion component"/>
    <property type="evidence" value="ECO:0007669"/>
    <property type="project" value="UniProtKB-KW"/>
</dbReference>
<dbReference type="GO" id="GO:0003677">
    <property type="term" value="F:DNA binding"/>
    <property type="evidence" value="ECO:0007669"/>
    <property type="project" value="InterPro"/>
</dbReference>
<dbReference type="GO" id="GO:0003899">
    <property type="term" value="F:DNA-directed RNA polymerase activity"/>
    <property type="evidence" value="ECO:0007669"/>
    <property type="project" value="UniProtKB-EC"/>
</dbReference>
<dbReference type="GO" id="GO:0008270">
    <property type="term" value="F:zinc ion binding"/>
    <property type="evidence" value="ECO:0007669"/>
    <property type="project" value="UniProtKB-KW"/>
</dbReference>
<dbReference type="GO" id="GO:0006351">
    <property type="term" value="P:DNA-templated transcription"/>
    <property type="evidence" value="ECO:0007669"/>
    <property type="project" value="InterPro"/>
</dbReference>
<dbReference type="GO" id="GO:0039695">
    <property type="term" value="P:DNA-templated viral transcription"/>
    <property type="evidence" value="ECO:0000314"/>
    <property type="project" value="UniProtKB"/>
</dbReference>
<dbReference type="Gene3D" id="2.20.25.10">
    <property type="match status" value="1"/>
</dbReference>
<dbReference type="InterPro" id="IPR009162">
    <property type="entry name" value="RNA_pol_30_chordopoxvir-type"/>
</dbReference>
<dbReference type="InterPro" id="IPR024394">
    <property type="entry name" value="RNA_pol_30_chordopoxvir-type_N"/>
</dbReference>
<dbReference type="InterPro" id="IPR001222">
    <property type="entry name" value="Znf_TFIIS"/>
</dbReference>
<dbReference type="Pfam" id="PF12410">
    <property type="entry name" value="rpo30_N"/>
    <property type="match status" value="1"/>
</dbReference>
<dbReference type="Pfam" id="PF01096">
    <property type="entry name" value="Zn_ribbon_TFIIS"/>
    <property type="match status" value="1"/>
</dbReference>
<dbReference type="PIRSF" id="PIRSF000745">
    <property type="entry name" value="VAC_RPO30"/>
    <property type="match status" value="1"/>
</dbReference>
<dbReference type="SMART" id="SM00440">
    <property type="entry name" value="ZnF_C2C2"/>
    <property type="match status" value="1"/>
</dbReference>
<dbReference type="SUPFAM" id="SSF57783">
    <property type="entry name" value="Zinc beta-ribbon"/>
    <property type="match status" value="1"/>
</dbReference>
<dbReference type="PROSITE" id="PS00466">
    <property type="entry name" value="ZF_TFIIS_1"/>
    <property type="match status" value="1"/>
</dbReference>
<dbReference type="PROSITE" id="PS51133">
    <property type="entry name" value="ZF_TFIIS_2"/>
    <property type="match status" value="1"/>
</dbReference>